<reference key="1">
    <citation type="journal article" date="1990" name="Nucleic Acids Res.">
        <title>Structure and expression of the Euglena gracilis nuclear gene coding for the translation elongation factor EF-1 alpha.</title>
        <authorList>
            <person name="Montandon P.E."/>
            <person name="Stutz E."/>
        </authorList>
    </citation>
    <scope>NUCLEOTIDE SEQUENCE [MRNA]</scope>
    <source>
        <strain>Z / UTEX 753</strain>
    </source>
</reference>
<feature type="chain" id="PRO_0000090935" description="Elongation factor 1-alpha">
    <location>
        <begin position="1"/>
        <end position="445"/>
    </location>
</feature>
<feature type="domain" description="tr-type G" evidence="3">
    <location>
        <begin position="5"/>
        <end position="230"/>
    </location>
</feature>
<feature type="region of interest" description="G1" evidence="3">
    <location>
        <begin position="14"/>
        <end position="21"/>
    </location>
</feature>
<feature type="region of interest" description="G2" evidence="3">
    <location>
        <begin position="70"/>
        <end position="74"/>
    </location>
</feature>
<feature type="region of interest" description="G3" evidence="3">
    <location>
        <begin position="91"/>
        <end position="94"/>
    </location>
</feature>
<feature type="region of interest" description="G4" evidence="3">
    <location>
        <begin position="153"/>
        <end position="156"/>
    </location>
</feature>
<feature type="region of interest" description="G5" evidence="3">
    <location>
        <begin position="194"/>
        <end position="196"/>
    </location>
</feature>
<feature type="binding site" evidence="1">
    <location>
        <begin position="14"/>
        <end position="21"/>
    </location>
    <ligand>
        <name>GTP</name>
        <dbReference type="ChEBI" id="CHEBI:37565"/>
    </ligand>
</feature>
<feature type="binding site" evidence="1">
    <location>
        <begin position="91"/>
        <end position="95"/>
    </location>
    <ligand>
        <name>GTP</name>
        <dbReference type="ChEBI" id="CHEBI:37565"/>
    </ligand>
</feature>
<feature type="binding site" evidence="1">
    <location>
        <begin position="153"/>
        <end position="156"/>
    </location>
    <ligand>
        <name>GTP</name>
        <dbReference type="ChEBI" id="CHEBI:37565"/>
    </ligand>
</feature>
<feature type="modified residue" description="N6,N6-dimethyllysine" evidence="2">
    <location>
        <position position="55"/>
    </location>
</feature>
<feature type="modified residue" description="N6,N6,N6-trimethyllysine" evidence="2">
    <location>
        <position position="79"/>
    </location>
</feature>
<feature type="modified residue" description="N6,N6,N6-trimethyllysine" evidence="2">
    <location>
        <position position="187"/>
    </location>
</feature>
<feature type="modified residue" description="N6-methyllysine" evidence="2">
    <location>
        <position position="261"/>
    </location>
</feature>
<feature type="modified residue" description="N6,N6,N6-trimethyllysine" evidence="2">
    <location>
        <position position="306"/>
    </location>
</feature>
<feature type="modified residue" description="N6,N6,N6-trimethyllysine" evidence="2">
    <location>
        <position position="396"/>
    </location>
</feature>
<proteinExistence type="evidence at transcript level"/>
<accession>P14963</accession>
<protein>
    <recommendedName>
        <fullName>Elongation factor 1-alpha</fullName>
        <shortName>EF-1-alpha</shortName>
    </recommendedName>
</protein>
<gene>
    <name type="primary">TEF</name>
</gene>
<evidence type="ECO:0000250" key="1"/>
<evidence type="ECO:0000250" key="2">
    <source>
        <dbReference type="UniProtKB" id="Q8GTY0"/>
    </source>
</evidence>
<evidence type="ECO:0000255" key="3">
    <source>
        <dbReference type="PROSITE-ProRule" id="PRU01059"/>
    </source>
</evidence>
<organism>
    <name type="scientific">Euglena gracilis</name>
    <dbReference type="NCBI Taxonomy" id="3039"/>
    <lineage>
        <taxon>Eukaryota</taxon>
        <taxon>Discoba</taxon>
        <taxon>Euglenozoa</taxon>
        <taxon>Euglenida</taxon>
        <taxon>Spirocuta</taxon>
        <taxon>Euglenophyceae</taxon>
        <taxon>Euglenales</taxon>
        <taxon>Euglenaceae</taxon>
        <taxon>Euglena</taxon>
    </lineage>
</organism>
<comment type="function">
    <text>This protein promotes the GTP-dependent binding of aminoacyl-tRNA to the A-site of ribosomes during protein biosynthesis.</text>
</comment>
<comment type="subcellular location">
    <subcellularLocation>
        <location>Cytoplasm</location>
    </subcellularLocation>
</comment>
<comment type="similarity">
    <text evidence="3">Belongs to the TRAFAC class translation factor GTPase superfamily. Classic translation factor GTPase family. EF-Tu/EF-1A subfamily.</text>
</comment>
<dbReference type="EMBL" id="X16890">
    <property type="protein sequence ID" value="CAA34769.1"/>
    <property type="molecule type" value="mRNA"/>
</dbReference>
<dbReference type="PIR" id="S07724">
    <property type="entry name" value="S07724"/>
</dbReference>
<dbReference type="SMR" id="P14963"/>
<dbReference type="GO" id="GO:0005737">
    <property type="term" value="C:cytoplasm"/>
    <property type="evidence" value="ECO:0007669"/>
    <property type="project" value="UniProtKB-SubCell"/>
</dbReference>
<dbReference type="GO" id="GO:0005525">
    <property type="term" value="F:GTP binding"/>
    <property type="evidence" value="ECO:0007669"/>
    <property type="project" value="UniProtKB-KW"/>
</dbReference>
<dbReference type="GO" id="GO:0003924">
    <property type="term" value="F:GTPase activity"/>
    <property type="evidence" value="ECO:0007669"/>
    <property type="project" value="InterPro"/>
</dbReference>
<dbReference type="GO" id="GO:0003746">
    <property type="term" value="F:translation elongation factor activity"/>
    <property type="evidence" value="ECO:0007669"/>
    <property type="project" value="UniProtKB-KW"/>
</dbReference>
<dbReference type="CDD" id="cd01883">
    <property type="entry name" value="EF1_alpha"/>
    <property type="match status" value="1"/>
</dbReference>
<dbReference type="CDD" id="cd03693">
    <property type="entry name" value="EF1_alpha_II"/>
    <property type="match status" value="1"/>
</dbReference>
<dbReference type="CDD" id="cd03705">
    <property type="entry name" value="EF1_alpha_III"/>
    <property type="match status" value="1"/>
</dbReference>
<dbReference type="FunFam" id="2.40.30.10:FF:000003">
    <property type="entry name" value="Elongation factor 1-alpha"/>
    <property type="match status" value="1"/>
</dbReference>
<dbReference type="FunFam" id="2.40.30.10:FF:000005">
    <property type="entry name" value="Elongation factor 1-alpha"/>
    <property type="match status" value="1"/>
</dbReference>
<dbReference type="FunFam" id="3.40.50.300:FF:000255">
    <property type="entry name" value="Elongation factor 1-alpha"/>
    <property type="match status" value="1"/>
</dbReference>
<dbReference type="Gene3D" id="3.40.50.300">
    <property type="entry name" value="P-loop containing nucleotide triphosphate hydrolases"/>
    <property type="match status" value="1"/>
</dbReference>
<dbReference type="Gene3D" id="2.40.30.10">
    <property type="entry name" value="Translation factors"/>
    <property type="match status" value="2"/>
</dbReference>
<dbReference type="InterPro" id="IPR004161">
    <property type="entry name" value="EFTu-like_2"/>
</dbReference>
<dbReference type="InterPro" id="IPR031157">
    <property type="entry name" value="G_TR_CS"/>
</dbReference>
<dbReference type="InterPro" id="IPR054696">
    <property type="entry name" value="GTP-eEF1A_C"/>
</dbReference>
<dbReference type="InterPro" id="IPR027417">
    <property type="entry name" value="P-loop_NTPase"/>
</dbReference>
<dbReference type="InterPro" id="IPR000795">
    <property type="entry name" value="T_Tr_GTP-bd_dom"/>
</dbReference>
<dbReference type="InterPro" id="IPR050100">
    <property type="entry name" value="TRAFAC_GTPase_members"/>
</dbReference>
<dbReference type="InterPro" id="IPR009000">
    <property type="entry name" value="Transl_B-barrel_sf"/>
</dbReference>
<dbReference type="InterPro" id="IPR009001">
    <property type="entry name" value="Transl_elong_EF1A/Init_IF2_C"/>
</dbReference>
<dbReference type="InterPro" id="IPR004539">
    <property type="entry name" value="Transl_elong_EF1A_euk/arc"/>
</dbReference>
<dbReference type="NCBIfam" id="TIGR00483">
    <property type="entry name" value="EF-1_alpha"/>
    <property type="match status" value="1"/>
</dbReference>
<dbReference type="NCBIfam" id="NF008969">
    <property type="entry name" value="PRK12317.1"/>
    <property type="match status" value="1"/>
</dbReference>
<dbReference type="PANTHER" id="PTHR23115">
    <property type="entry name" value="TRANSLATION FACTOR"/>
    <property type="match status" value="1"/>
</dbReference>
<dbReference type="Pfam" id="PF22594">
    <property type="entry name" value="GTP-eEF1A_C"/>
    <property type="match status" value="1"/>
</dbReference>
<dbReference type="Pfam" id="PF00009">
    <property type="entry name" value="GTP_EFTU"/>
    <property type="match status" value="1"/>
</dbReference>
<dbReference type="Pfam" id="PF03144">
    <property type="entry name" value="GTP_EFTU_D2"/>
    <property type="match status" value="1"/>
</dbReference>
<dbReference type="PRINTS" id="PR00315">
    <property type="entry name" value="ELONGATNFCT"/>
</dbReference>
<dbReference type="SUPFAM" id="SSF50465">
    <property type="entry name" value="EF-Tu/eEF-1alpha/eIF2-gamma C-terminal domain"/>
    <property type="match status" value="1"/>
</dbReference>
<dbReference type="SUPFAM" id="SSF52540">
    <property type="entry name" value="P-loop containing nucleoside triphosphate hydrolases"/>
    <property type="match status" value="1"/>
</dbReference>
<dbReference type="SUPFAM" id="SSF50447">
    <property type="entry name" value="Translation proteins"/>
    <property type="match status" value="1"/>
</dbReference>
<dbReference type="PROSITE" id="PS00301">
    <property type="entry name" value="G_TR_1"/>
    <property type="match status" value="1"/>
</dbReference>
<dbReference type="PROSITE" id="PS51722">
    <property type="entry name" value="G_TR_2"/>
    <property type="match status" value="1"/>
</dbReference>
<name>EF1A_EUGGR</name>
<keyword id="KW-0963">Cytoplasm</keyword>
<keyword id="KW-0251">Elongation factor</keyword>
<keyword id="KW-0342">GTP-binding</keyword>
<keyword id="KW-0488">Methylation</keyword>
<keyword id="KW-0547">Nucleotide-binding</keyword>
<keyword id="KW-0648">Protein biosynthesis</keyword>
<sequence length="445" mass="48613">MGKEKVHISLVVIGHVDSGKSTTTGHLIYKCGGIDKRTIEKFEKEASEMGKGSFKYAWVLDKLKAERERCITIDIALWKFETAKSVFTIIDAPGHRDFIKNMITGTSQADAAVLVIDSTTGGFEAGISKDGQTREHALLAYTLGVKQMIVATNKFDDKTVKYSQARYEEIKKEVSGYLKKVGYNPEKVPFIPISGWNGDNMIEASENMGWYKGLTLIGALDNLEPPKRPSDKPLRLPLQDVYKIGGIGTVPVGRVETGVLKPGDVVTFAPNNLTTEVKSVEMHHEALTEAVPGDNVGFNVKNVSVKDIRRGYVASNAKNDPAKEAADFTAQVIILNHPGQIGNGYAPVLDCHTCHIACKFATIQTKIDRRSGKELEAEPKFIKSGDAAIVLMKPQKPMCVESFTDYPPLGVSCGDMRQTVAVGVIKSVNKKENTGKVTKAAQKKK</sequence>